<reference key="1">
    <citation type="journal article" date="2004" name="Science">
        <title>Illuminating the evolutionary history of chlamydiae.</title>
        <authorList>
            <person name="Horn M."/>
            <person name="Collingro A."/>
            <person name="Schmitz-Esser S."/>
            <person name="Beier C.L."/>
            <person name="Purkhold U."/>
            <person name="Fartmann B."/>
            <person name="Brandt P."/>
            <person name="Nyakatura G.J."/>
            <person name="Droege M."/>
            <person name="Frishman D."/>
            <person name="Rattei T."/>
            <person name="Mewes H.-W."/>
            <person name="Wagner M."/>
        </authorList>
    </citation>
    <scope>NUCLEOTIDE SEQUENCE [LARGE SCALE GENOMIC DNA]</scope>
    <source>
        <strain>UWE25</strain>
    </source>
</reference>
<keyword id="KW-1185">Reference proteome</keyword>
<keyword id="KW-0687">Ribonucleoprotein</keyword>
<keyword id="KW-0689">Ribosomal protein</keyword>
<keyword id="KW-0694">RNA-binding</keyword>
<keyword id="KW-0699">rRNA-binding</keyword>
<keyword id="KW-0820">tRNA-binding</keyword>
<organism>
    <name type="scientific">Protochlamydia amoebophila (strain UWE25)</name>
    <dbReference type="NCBI Taxonomy" id="264201"/>
    <lineage>
        <taxon>Bacteria</taxon>
        <taxon>Pseudomonadati</taxon>
        <taxon>Chlamydiota</taxon>
        <taxon>Chlamydiia</taxon>
        <taxon>Parachlamydiales</taxon>
        <taxon>Parachlamydiaceae</taxon>
        <taxon>Candidatus Protochlamydia</taxon>
    </lineage>
</organism>
<proteinExistence type="inferred from homology"/>
<name>RL16_PARUW</name>
<accession>Q6ME56</accession>
<gene>
    <name evidence="1" type="primary">rplP</name>
    <name type="ordered locus">pc0419</name>
</gene>
<sequence>MPLMPKRTKHRKMQKGQFAGLSKGANFVHFGEYGIQVLERGWITNQQIEACRVAINRFFQRRGKVWIRIFPDKPITKKPAEVRMGKGKGAVDHWVAVVRPGRILFEVANVPKDMAQSALRRAAAKLGLKTRFVERVEQV</sequence>
<comment type="function">
    <text evidence="1">Binds 23S rRNA and is also seen to make contacts with the A and possibly P site tRNAs.</text>
</comment>
<comment type="subunit">
    <text evidence="1">Part of the 50S ribosomal subunit.</text>
</comment>
<comment type="similarity">
    <text evidence="1">Belongs to the universal ribosomal protein uL16 family.</text>
</comment>
<dbReference type="EMBL" id="BX908798">
    <property type="protein sequence ID" value="CAF23143.1"/>
    <property type="molecule type" value="Genomic_DNA"/>
</dbReference>
<dbReference type="RefSeq" id="WP_011174969.1">
    <property type="nucleotide sequence ID" value="NC_005861.2"/>
</dbReference>
<dbReference type="SMR" id="Q6ME56"/>
<dbReference type="STRING" id="264201.pc0419"/>
<dbReference type="KEGG" id="pcu:PC_RS02045"/>
<dbReference type="eggNOG" id="COG0197">
    <property type="taxonomic scope" value="Bacteria"/>
</dbReference>
<dbReference type="HOGENOM" id="CLU_078858_2_1_0"/>
<dbReference type="OrthoDB" id="9802589at2"/>
<dbReference type="Proteomes" id="UP000000529">
    <property type="component" value="Chromosome"/>
</dbReference>
<dbReference type="GO" id="GO:0022625">
    <property type="term" value="C:cytosolic large ribosomal subunit"/>
    <property type="evidence" value="ECO:0007669"/>
    <property type="project" value="TreeGrafter"/>
</dbReference>
<dbReference type="GO" id="GO:0019843">
    <property type="term" value="F:rRNA binding"/>
    <property type="evidence" value="ECO:0007669"/>
    <property type="project" value="UniProtKB-UniRule"/>
</dbReference>
<dbReference type="GO" id="GO:0003735">
    <property type="term" value="F:structural constituent of ribosome"/>
    <property type="evidence" value="ECO:0007669"/>
    <property type="project" value="InterPro"/>
</dbReference>
<dbReference type="GO" id="GO:0000049">
    <property type="term" value="F:tRNA binding"/>
    <property type="evidence" value="ECO:0007669"/>
    <property type="project" value="UniProtKB-KW"/>
</dbReference>
<dbReference type="GO" id="GO:0006412">
    <property type="term" value="P:translation"/>
    <property type="evidence" value="ECO:0007669"/>
    <property type="project" value="UniProtKB-UniRule"/>
</dbReference>
<dbReference type="CDD" id="cd01433">
    <property type="entry name" value="Ribosomal_L16_L10e"/>
    <property type="match status" value="1"/>
</dbReference>
<dbReference type="FunFam" id="3.90.1170.10:FF:000001">
    <property type="entry name" value="50S ribosomal protein L16"/>
    <property type="match status" value="1"/>
</dbReference>
<dbReference type="Gene3D" id="3.90.1170.10">
    <property type="entry name" value="Ribosomal protein L10e/L16"/>
    <property type="match status" value="1"/>
</dbReference>
<dbReference type="HAMAP" id="MF_01342">
    <property type="entry name" value="Ribosomal_uL16"/>
    <property type="match status" value="1"/>
</dbReference>
<dbReference type="InterPro" id="IPR047873">
    <property type="entry name" value="Ribosomal_uL16"/>
</dbReference>
<dbReference type="InterPro" id="IPR000114">
    <property type="entry name" value="Ribosomal_uL16_bact-type"/>
</dbReference>
<dbReference type="InterPro" id="IPR020798">
    <property type="entry name" value="Ribosomal_uL16_CS"/>
</dbReference>
<dbReference type="InterPro" id="IPR016180">
    <property type="entry name" value="Ribosomal_uL16_dom"/>
</dbReference>
<dbReference type="InterPro" id="IPR036920">
    <property type="entry name" value="Ribosomal_uL16_sf"/>
</dbReference>
<dbReference type="NCBIfam" id="TIGR01164">
    <property type="entry name" value="rplP_bact"/>
    <property type="match status" value="1"/>
</dbReference>
<dbReference type="PANTHER" id="PTHR12220">
    <property type="entry name" value="50S/60S RIBOSOMAL PROTEIN L16"/>
    <property type="match status" value="1"/>
</dbReference>
<dbReference type="PANTHER" id="PTHR12220:SF13">
    <property type="entry name" value="LARGE RIBOSOMAL SUBUNIT PROTEIN UL16M"/>
    <property type="match status" value="1"/>
</dbReference>
<dbReference type="Pfam" id="PF00252">
    <property type="entry name" value="Ribosomal_L16"/>
    <property type="match status" value="1"/>
</dbReference>
<dbReference type="PRINTS" id="PR00060">
    <property type="entry name" value="RIBOSOMALL16"/>
</dbReference>
<dbReference type="SUPFAM" id="SSF54686">
    <property type="entry name" value="Ribosomal protein L16p/L10e"/>
    <property type="match status" value="1"/>
</dbReference>
<dbReference type="PROSITE" id="PS00701">
    <property type="entry name" value="RIBOSOMAL_L16_2"/>
    <property type="match status" value="1"/>
</dbReference>
<feature type="chain" id="PRO_0000062160" description="Large ribosomal subunit protein uL16">
    <location>
        <begin position="1"/>
        <end position="139"/>
    </location>
</feature>
<protein>
    <recommendedName>
        <fullName evidence="1">Large ribosomal subunit protein uL16</fullName>
    </recommendedName>
    <alternativeName>
        <fullName evidence="2">50S ribosomal protein L16</fullName>
    </alternativeName>
</protein>
<evidence type="ECO:0000255" key="1">
    <source>
        <dbReference type="HAMAP-Rule" id="MF_01342"/>
    </source>
</evidence>
<evidence type="ECO:0000305" key="2"/>